<dbReference type="EMBL" id="CP001019">
    <property type="protein sequence ID" value="ACJ17581.1"/>
    <property type="molecule type" value="Genomic_DNA"/>
</dbReference>
<dbReference type="RefSeq" id="WP_012569603.1">
    <property type="nucleotide sequence ID" value="NC_011527.1"/>
</dbReference>
<dbReference type="SMR" id="B6J2V1"/>
<dbReference type="KEGG" id="cbg:CbuG_0130"/>
<dbReference type="HOGENOM" id="CLU_082184_2_2_6"/>
<dbReference type="GO" id="GO:0022625">
    <property type="term" value="C:cytosolic large ribosomal subunit"/>
    <property type="evidence" value="ECO:0007669"/>
    <property type="project" value="TreeGrafter"/>
</dbReference>
<dbReference type="GO" id="GO:0003729">
    <property type="term" value="F:mRNA binding"/>
    <property type="evidence" value="ECO:0007669"/>
    <property type="project" value="TreeGrafter"/>
</dbReference>
<dbReference type="GO" id="GO:0003735">
    <property type="term" value="F:structural constituent of ribosome"/>
    <property type="evidence" value="ECO:0007669"/>
    <property type="project" value="InterPro"/>
</dbReference>
<dbReference type="GO" id="GO:0017148">
    <property type="term" value="P:negative regulation of translation"/>
    <property type="evidence" value="ECO:0007669"/>
    <property type="project" value="TreeGrafter"/>
</dbReference>
<dbReference type="GO" id="GO:0006412">
    <property type="term" value="P:translation"/>
    <property type="evidence" value="ECO:0007669"/>
    <property type="project" value="UniProtKB-UniRule"/>
</dbReference>
<dbReference type="CDD" id="cd00392">
    <property type="entry name" value="Ribosomal_L13"/>
    <property type="match status" value="1"/>
</dbReference>
<dbReference type="FunFam" id="3.90.1180.10:FF:000001">
    <property type="entry name" value="50S ribosomal protein L13"/>
    <property type="match status" value="1"/>
</dbReference>
<dbReference type="Gene3D" id="3.90.1180.10">
    <property type="entry name" value="Ribosomal protein L13"/>
    <property type="match status" value="1"/>
</dbReference>
<dbReference type="HAMAP" id="MF_01366">
    <property type="entry name" value="Ribosomal_uL13"/>
    <property type="match status" value="1"/>
</dbReference>
<dbReference type="InterPro" id="IPR005822">
    <property type="entry name" value="Ribosomal_uL13"/>
</dbReference>
<dbReference type="InterPro" id="IPR005823">
    <property type="entry name" value="Ribosomal_uL13_bac-type"/>
</dbReference>
<dbReference type="InterPro" id="IPR023563">
    <property type="entry name" value="Ribosomal_uL13_CS"/>
</dbReference>
<dbReference type="InterPro" id="IPR036899">
    <property type="entry name" value="Ribosomal_uL13_sf"/>
</dbReference>
<dbReference type="NCBIfam" id="TIGR01066">
    <property type="entry name" value="rplM_bact"/>
    <property type="match status" value="1"/>
</dbReference>
<dbReference type="PANTHER" id="PTHR11545:SF2">
    <property type="entry name" value="LARGE RIBOSOMAL SUBUNIT PROTEIN UL13M"/>
    <property type="match status" value="1"/>
</dbReference>
<dbReference type="PANTHER" id="PTHR11545">
    <property type="entry name" value="RIBOSOMAL PROTEIN L13"/>
    <property type="match status" value="1"/>
</dbReference>
<dbReference type="Pfam" id="PF00572">
    <property type="entry name" value="Ribosomal_L13"/>
    <property type="match status" value="1"/>
</dbReference>
<dbReference type="PIRSF" id="PIRSF002181">
    <property type="entry name" value="Ribosomal_L13"/>
    <property type="match status" value="1"/>
</dbReference>
<dbReference type="SUPFAM" id="SSF52161">
    <property type="entry name" value="Ribosomal protein L13"/>
    <property type="match status" value="1"/>
</dbReference>
<dbReference type="PROSITE" id="PS00783">
    <property type="entry name" value="RIBOSOMAL_L13"/>
    <property type="match status" value="1"/>
</dbReference>
<proteinExistence type="inferred from homology"/>
<name>RL13_COXB2</name>
<organism>
    <name type="scientific">Coxiella burnetii (strain CbuG_Q212)</name>
    <name type="common">Coxiella burnetii (strain Q212)</name>
    <dbReference type="NCBI Taxonomy" id="434923"/>
    <lineage>
        <taxon>Bacteria</taxon>
        <taxon>Pseudomonadati</taxon>
        <taxon>Pseudomonadota</taxon>
        <taxon>Gammaproteobacteria</taxon>
        <taxon>Legionellales</taxon>
        <taxon>Coxiellaceae</taxon>
        <taxon>Coxiella</taxon>
    </lineage>
</organism>
<reference key="1">
    <citation type="journal article" date="2009" name="Infect. Immun.">
        <title>Comparative genomics reveal extensive transposon-mediated genomic plasticity and diversity among potential effector proteins within the genus Coxiella.</title>
        <authorList>
            <person name="Beare P.A."/>
            <person name="Unsworth N."/>
            <person name="Andoh M."/>
            <person name="Voth D.E."/>
            <person name="Omsland A."/>
            <person name="Gilk S.D."/>
            <person name="Williams K.P."/>
            <person name="Sobral B.W."/>
            <person name="Kupko J.J. III"/>
            <person name="Porcella S.F."/>
            <person name="Samuel J.E."/>
            <person name="Heinzen R.A."/>
        </authorList>
    </citation>
    <scope>NUCLEOTIDE SEQUENCE [LARGE SCALE GENOMIC DNA]</scope>
    <source>
        <strain>CbuG_Q212</strain>
    </source>
</reference>
<feature type="chain" id="PRO_1000144112" description="Large ribosomal subunit protein uL13">
    <location>
        <begin position="1"/>
        <end position="142"/>
    </location>
</feature>
<keyword id="KW-0687">Ribonucleoprotein</keyword>
<keyword id="KW-0689">Ribosomal protein</keyword>
<protein>
    <recommendedName>
        <fullName evidence="1">Large ribosomal subunit protein uL13</fullName>
    </recommendedName>
    <alternativeName>
        <fullName evidence="2">50S ribosomal protein L13</fullName>
    </alternativeName>
</protein>
<accession>B6J2V1</accession>
<evidence type="ECO:0000255" key="1">
    <source>
        <dbReference type="HAMAP-Rule" id="MF_01366"/>
    </source>
</evidence>
<evidence type="ECO:0000305" key="2"/>
<gene>
    <name evidence="1" type="primary">rplM</name>
    <name type="ordered locus">CbuG_0130</name>
</gene>
<sequence length="142" mass="15825">MATYMANAKTVSPRWLLVNAEGKTLGRLASRIAAILRGKHKAEFTPHVDAGDFVVVINVDKLKITGNKTQDKQYHHHSGYPGGLKTINFADLQAKKPQRILELAIKGMLPKGPLGRQLYRKLKIYAGDQHPHQAQQPELIDL</sequence>
<comment type="function">
    <text evidence="1">This protein is one of the early assembly proteins of the 50S ribosomal subunit, although it is not seen to bind rRNA by itself. It is important during the early stages of 50S assembly.</text>
</comment>
<comment type="subunit">
    <text evidence="1">Part of the 50S ribosomal subunit.</text>
</comment>
<comment type="similarity">
    <text evidence="1">Belongs to the universal ribosomal protein uL13 family.</text>
</comment>